<dbReference type="EMBL" id="CP001011">
    <property type="protein sequence ID" value="ACB91715.1"/>
    <property type="molecule type" value="Genomic_DNA"/>
</dbReference>
<dbReference type="RefSeq" id="WP_004087914.1">
    <property type="nucleotide sequence ID" value="NC_010577.1"/>
</dbReference>
<dbReference type="SMR" id="B2I7I7"/>
<dbReference type="KEGG" id="xfn:XfasM23_0264"/>
<dbReference type="HOGENOM" id="CLU_019375_7_0_6"/>
<dbReference type="Proteomes" id="UP000001698">
    <property type="component" value="Chromosome"/>
</dbReference>
<dbReference type="GO" id="GO:0005886">
    <property type="term" value="C:plasma membrane"/>
    <property type="evidence" value="ECO:0007669"/>
    <property type="project" value="UniProtKB-SubCell"/>
</dbReference>
<dbReference type="GO" id="GO:0015138">
    <property type="term" value="F:fumarate transmembrane transporter activity"/>
    <property type="evidence" value="ECO:0007669"/>
    <property type="project" value="TreeGrafter"/>
</dbReference>
<dbReference type="GO" id="GO:0015366">
    <property type="term" value="F:malate:proton symporter activity"/>
    <property type="evidence" value="ECO:0007669"/>
    <property type="project" value="TreeGrafter"/>
</dbReference>
<dbReference type="GO" id="GO:0015141">
    <property type="term" value="F:succinate transmembrane transporter activity"/>
    <property type="evidence" value="ECO:0007669"/>
    <property type="project" value="TreeGrafter"/>
</dbReference>
<dbReference type="GO" id="GO:0070778">
    <property type="term" value="P:L-aspartate transmembrane transport"/>
    <property type="evidence" value="ECO:0007669"/>
    <property type="project" value="TreeGrafter"/>
</dbReference>
<dbReference type="FunFam" id="1.10.3860.10:FF:000001">
    <property type="entry name" value="C4-dicarboxylate transport protein"/>
    <property type="match status" value="1"/>
</dbReference>
<dbReference type="Gene3D" id="1.10.3860.10">
    <property type="entry name" value="Sodium:dicarboxylate symporter"/>
    <property type="match status" value="1"/>
</dbReference>
<dbReference type="HAMAP" id="MF_01300">
    <property type="entry name" value="C4_dicarb_transport"/>
    <property type="match status" value="1"/>
</dbReference>
<dbReference type="InterPro" id="IPR023954">
    <property type="entry name" value="C4_dicarb_transport"/>
</dbReference>
<dbReference type="InterPro" id="IPR001991">
    <property type="entry name" value="Na-dicarboxylate_symporter"/>
</dbReference>
<dbReference type="InterPro" id="IPR018107">
    <property type="entry name" value="Na-dicarboxylate_symporter_CS"/>
</dbReference>
<dbReference type="InterPro" id="IPR036458">
    <property type="entry name" value="Na:dicarbo_symporter_sf"/>
</dbReference>
<dbReference type="NCBIfam" id="NF002461">
    <property type="entry name" value="PRK01663.1"/>
    <property type="match status" value="1"/>
</dbReference>
<dbReference type="PANTHER" id="PTHR42865:SF1">
    <property type="entry name" value="AEROBIC C4-DICARBOXYLATE TRANSPORT PROTEIN"/>
    <property type="match status" value="1"/>
</dbReference>
<dbReference type="PANTHER" id="PTHR42865">
    <property type="entry name" value="PROTON/GLUTAMATE-ASPARTATE SYMPORTER"/>
    <property type="match status" value="1"/>
</dbReference>
<dbReference type="Pfam" id="PF00375">
    <property type="entry name" value="SDF"/>
    <property type="match status" value="1"/>
</dbReference>
<dbReference type="PRINTS" id="PR00173">
    <property type="entry name" value="EDTRNSPORT"/>
</dbReference>
<dbReference type="SUPFAM" id="SSF118215">
    <property type="entry name" value="Proton glutamate symport protein"/>
    <property type="match status" value="1"/>
</dbReference>
<dbReference type="PROSITE" id="PS00713">
    <property type="entry name" value="NA_DICARBOXYL_SYMP_1"/>
    <property type="match status" value="1"/>
</dbReference>
<dbReference type="PROSITE" id="PS00714">
    <property type="entry name" value="NA_DICARBOXYL_SYMP_2"/>
    <property type="match status" value="1"/>
</dbReference>
<gene>
    <name evidence="1" type="primary">dctA</name>
    <name type="ordered locus">XfasM23_0264</name>
</gene>
<sequence>MHPSSRANGPAPHKPYNPFYLQLYFWVIIAIILGALLGHCYPAVGQQLKPLGDAFIKLVKMIISPVIFLTIVTGIASVAHVGTVARVFGKAMVYFLFFSTLALLLGLVVAHVVHPGAGMNINPVDLHQGEIANYVEKSHDLTLVGFLMDIIPKTLLSPFVGDNILQVLFVAVLFGIALALAGERGKPVLNLLDALTVPVFKLVQMLMKMAPIGAFGAIAFTIGKYGVDSLVNLGGLVGSFYLTSLLFVLVILGAVSWLCGFSILKLIRYLKAELLLVLGTSSSESALPSLMEKMVQAGCGKSVVGLVVPTGYSFNLDGTNIYMTLAALFIAQATNTELTPAHQLALFLVAMLSSKGAAGVSGAGFITLAATLAVVPEVPIAGMALILGVDRFMSECRSLTNFIGNAVATLVVSRWENALNYEQLKIALDGSEAAYQSLHANDAEPSVSR</sequence>
<name>DCTA_XYLF2</name>
<organism>
    <name type="scientific">Xylella fastidiosa (strain M23)</name>
    <dbReference type="NCBI Taxonomy" id="405441"/>
    <lineage>
        <taxon>Bacteria</taxon>
        <taxon>Pseudomonadati</taxon>
        <taxon>Pseudomonadota</taxon>
        <taxon>Gammaproteobacteria</taxon>
        <taxon>Lysobacterales</taxon>
        <taxon>Lysobacteraceae</taxon>
        <taxon>Xylella</taxon>
    </lineage>
</organism>
<keyword id="KW-0997">Cell inner membrane</keyword>
<keyword id="KW-1003">Cell membrane</keyword>
<keyword id="KW-0472">Membrane</keyword>
<keyword id="KW-0769">Symport</keyword>
<keyword id="KW-0812">Transmembrane</keyword>
<keyword id="KW-1133">Transmembrane helix</keyword>
<keyword id="KW-0813">Transport</keyword>
<reference key="1">
    <citation type="journal article" date="2010" name="J. Bacteriol.">
        <title>Whole genome sequences of two Xylella fastidiosa strains (M12 and M23) causing almond leaf scorch disease in California.</title>
        <authorList>
            <person name="Chen J."/>
            <person name="Xie G."/>
            <person name="Han S."/>
            <person name="Chertkov O."/>
            <person name="Sims D."/>
            <person name="Civerolo E.L."/>
        </authorList>
    </citation>
    <scope>NUCLEOTIDE SEQUENCE [LARGE SCALE GENOMIC DNA]</scope>
    <source>
        <strain>M23</strain>
    </source>
</reference>
<comment type="function">
    <text evidence="1">Responsible for the transport of dicarboxylates such as succinate, fumarate, and malate from the periplasm across the membrane.</text>
</comment>
<comment type="subcellular location">
    <subcellularLocation>
        <location evidence="1">Cell inner membrane</location>
        <topology evidence="1">Multi-pass membrane protein</topology>
    </subcellularLocation>
</comment>
<comment type="similarity">
    <text evidence="1">Belongs to the dicarboxylate/amino acid:cation symporter (DAACS) (TC 2.A.23) family.</text>
</comment>
<accession>B2I7I7</accession>
<feature type="chain" id="PRO_1000140475" description="C4-dicarboxylate transport protein">
    <location>
        <begin position="1"/>
        <end position="449"/>
    </location>
</feature>
<feature type="transmembrane region" description="Helical" evidence="1">
    <location>
        <begin position="18"/>
        <end position="38"/>
    </location>
</feature>
<feature type="transmembrane region" description="Helical" evidence="1">
    <location>
        <begin position="61"/>
        <end position="81"/>
    </location>
</feature>
<feature type="transmembrane region" description="Helical" evidence="1">
    <location>
        <begin position="93"/>
        <end position="113"/>
    </location>
</feature>
<feature type="transmembrane region" description="Helical" evidence="1">
    <location>
        <begin position="159"/>
        <end position="179"/>
    </location>
</feature>
<feature type="transmembrane region" description="Helical" evidence="1">
    <location>
        <begin position="202"/>
        <end position="222"/>
    </location>
</feature>
<feature type="transmembrane region" description="Helical" evidence="1">
    <location>
        <begin position="244"/>
        <end position="264"/>
    </location>
</feature>
<feature type="transmembrane region" description="Helical" evidence="1">
    <location>
        <begin position="346"/>
        <end position="366"/>
    </location>
</feature>
<feature type="transmembrane region" description="Helical" evidence="1">
    <location>
        <begin position="369"/>
        <end position="389"/>
    </location>
</feature>
<protein>
    <recommendedName>
        <fullName evidence="1">C4-dicarboxylate transport protein</fullName>
    </recommendedName>
</protein>
<evidence type="ECO:0000255" key="1">
    <source>
        <dbReference type="HAMAP-Rule" id="MF_01300"/>
    </source>
</evidence>
<proteinExistence type="inferred from homology"/>